<gene>
    <name evidence="1" type="primary">hslO</name>
    <name type="ordered locus">PSPA7_5937</name>
</gene>
<organism>
    <name type="scientific">Pseudomonas paraeruginosa (strain DSM 24068 / PA7)</name>
    <name type="common">Pseudomonas aeruginosa (strain PA7)</name>
    <dbReference type="NCBI Taxonomy" id="381754"/>
    <lineage>
        <taxon>Bacteria</taxon>
        <taxon>Pseudomonadati</taxon>
        <taxon>Pseudomonadota</taxon>
        <taxon>Gammaproteobacteria</taxon>
        <taxon>Pseudomonadales</taxon>
        <taxon>Pseudomonadaceae</taxon>
        <taxon>Pseudomonas</taxon>
        <taxon>Pseudomonas paraeruginosa</taxon>
    </lineage>
</organism>
<evidence type="ECO:0000255" key="1">
    <source>
        <dbReference type="HAMAP-Rule" id="MF_00117"/>
    </source>
</evidence>
<sequence length="297" mass="32701">MSHSDQSQRFLFDDTDVRGEMVDLERSYSEVLAKHPYPEPVAQLLGEMLAAASLLCGTLKFDGLLVLQARSSGAVPLLMVECSSDRQVRGLARYSAEAIGAGAGMQELMPEGVLTLTVDPVKGQRYQGIVALEGVNLAECLSNYFASSEQLPTRFWLNADGRRARGLLLQQLPADRLKDPEAREASWQHLTTLADTLTAEELLALDNETVLHRLYHEETVRLFEPQPLVFHCSCSRERSANALVSLGQADCERLLEEEEGAITIDCQFCNQRYLFDASDVAQLFAGAGSQGPSATRH</sequence>
<dbReference type="EMBL" id="CP000744">
    <property type="protein sequence ID" value="ABR86300.1"/>
    <property type="molecule type" value="Genomic_DNA"/>
</dbReference>
<dbReference type="RefSeq" id="WP_012077826.1">
    <property type="nucleotide sequence ID" value="NC_009656.1"/>
</dbReference>
<dbReference type="SMR" id="A6VDW9"/>
<dbReference type="KEGG" id="pap:PSPA7_5937"/>
<dbReference type="HOGENOM" id="CLU_054493_0_0_6"/>
<dbReference type="Proteomes" id="UP000001582">
    <property type="component" value="Chromosome"/>
</dbReference>
<dbReference type="GO" id="GO:0005737">
    <property type="term" value="C:cytoplasm"/>
    <property type="evidence" value="ECO:0007669"/>
    <property type="project" value="UniProtKB-SubCell"/>
</dbReference>
<dbReference type="GO" id="GO:0044183">
    <property type="term" value="F:protein folding chaperone"/>
    <property type="evidence" value="ECO:0007669"/>
    <property type="project" value="TreeGrafter"/>
</dbReference>
<dbReference type="GO" id="GO:0051082">
    <property type="term" value="F:unfolded protein binding"/>
    <property type="evidence" value="ECO:0007669"/>
    <property type="project" value="UniProtKB-UniRule"/>
</dbReference>
<dbReference type="GO" id="GO:0042026">
    <property type="term" value="P:protein refolding"/>
    <property type="evidence" value="ECO:0007669"/>
    <property type="project" value="TreeGrafter"/>
</dbReference>
<dbReference type="CDD" id="cd00498">
    <property type="entry name" value="Hsp33"/>
    <property type="match status" value="1"/>
</dbReference>
<dbReference type="Gene3D" id="1.10.287.480">
    <property type="entry name" value="helix hairpin bin"/>
    <property type="match status" value="1"/>
</dbReference>
<dbReference type="Gene3D" id="3.55.30.10">
    <property type="entry name" value="Hsp33 domain"/>
    <property type="match status" value="1"/>
</dbReference>
<dbReference type="Gene3D" id="3.90.1280.10">
    <property type="entry name" value="HSP33 redox switch-like"/>
    <property type="match status" value="1"/>
</dbReference>
<dbReference type="HAMAP" id="MF_00117">
    <property type="entry name" value="HslO"/>
    <property type="match status" value="1"/>
</dbReference>
<dbReference type="InterPro" id="IPR000397">
    <property type="entry name" value="Heat_shock_Hsp33"/>
</dbReference>
<dbReference type="InterPro" id="IPR016154">
    <property type="entry name" value="Heat_shock_Hsp33_C"/>
</dbReference>
<dbReference type="InterPro" id="IPR016153">
    <property type="entry name" value="Heat_shock_Hsp33_N"/>
</dbReference>
<dbReference type="InterPro" id="IPR023212">
    <property type="entry name" value="Hsp33_helix_hairpin_bin_dom_sf"/>
</dbReference>
<dbReference type="NCBIfam" id="NF001033">
    <property type="entry name" value="PRK00114.1"/>
    <property type="match status" value="1"/>
</dbReference>
<dbReference type="PANTHER" id="PTHR30111">
    <property type="entry name" value="33 KDA CHAPERONIN"/>
    <property type="match status" value="1"/>
</dbReference>
<dbReference type="PANTHER" id="PTHR30111:SF1">
    <property type="entry name" value="33 KDA CHAPERONIN"/>
    <property type="match status" value="1"/>
</dbReference>
<dbReference type="Pfam" id="PF01430">
    <property type="entry name" value="HSP33"/>
    <property type="match status" value="1"/>
</dbReference>
<dbReference type="PIRSF" id="PIRSF005261">
    <property type="entry name" value="Heat_shock_Hsp33"/>
    <property type="match status" value="1"/>
</dbReference>
<dbReference type="SUPFAM" id="SSF64397">
    <property type="entry name" value="Hsp33 domain"/>
    <property type="match status" value="1"/>
</dbReference>
<dbReference type="SUPFAM" id="SSF118352">
    <property type="entry name" value="HSP33 redox switch-like"/>
    <property type="match status" value="1"/>
</dbReference>
<keyword id="KW-0143">Chaperone</keyword>
<keyword id="KW-0963">Cytoplasm</keyword>
<keyword id="KW-1015">Disulfide bond</keyword>
<keyword id="KW-0676">Redox-active center</keyword>
<keyword id="KW-0346">Stress response</keyword>
<keyword id="KW-0862">Zinc</keyword>
<comment type="function">
    <text evidence="1">Redox regulated molecular chaperone. Protects both thermally unfolding and oxidatively damaged proteins from irreversible aggregation. Plays an important role in the bacterial defense system toward oxidative stress.</text>
</comment>
<comment type="subcellular location">
    <subcellularLocation>
        <location evidence="1">Cytoplasm</location>
    </subcellularLocation>
</comment>
<comment type="PTM">
    <text evidence="1">Under oxidizing conditions two disulfide bonds are formed involving the reactive cysteines. Under reducing conditions zinc is bound to the reactive cysteines and the protein is inactive.</text>
</comment>
<comment type="similarity">
    <text evidence="1">Belongs to the HSP33 family.</text>
</comment>
<accession>A6VDW9</accession>
<reference key="1">
    <citation type="submission" date="2007-06" db="EMBL/GenBank/DDBJ databases">
        <authorList>
            <person name="Dodson R.J."/>
            <person name="Harkins D."/>
            <person name="Paulsen I.T."/>
        </authorList>
    </citation>
    <scope>NUCLEOTIDE SEQUENCE [LARGE SCALE GENOMIC DNA]</scope>
    <source>
        <strain>DSM 24068 / PA7</strain>
    </source>
</reference>
<feature type="chain" id="PRO_1000015559" description="33 kDa chaperonin">
    <location>
        <begin position="1"/>
        <end position="297"/>
    </location>
</feature>
<feature type="disulfide bond" description="Redox-active" evidence="1">
    <location>
        <begin position="232"/>
        <end position="234"/>
    </location>
</feature>
<feature type="disulfide bond" description="Redox-active" evidence="1">
    <location>
        <begin position="266"/>
        <end position="269"/>
    </location>
</feature>
<name>HSLO_PSEP7</name>
<proteinExistence type="inferred from homology"/>
<protein>
    <recommendedName>
        <fullName evidence="1">33 kDa chaperonin</fullName>
    </recommendedName>
    <alternativeName>
        <fullName evidence="1">Heat shock protein 33 homolog</fullName>
        <shortName evidence="1">HSP33</shortName>
    </alternativeName>
</protein>